<organism>
    <name type="scientific">Homo sapiens</name>
    <name type="common">Human</name>
    <dbReference type="NCBI Taxonomy" id="9606"/>
    <lineage>
        <taxon>Eukaryota</taxon>
        <taxon>Metazoa</taxon>
        <taxon>Chordata</taxon>
        <taxon>Craniata</taxon>
        <taxon>Vertebrata</taxon>
        <taxon>Euteleostomi</taxon>
        <taxon>Mammalia</taxon>
        <taxon>Eutheria</taxon>
        <taxon>Euarchontoglires</taxon>
        <taxon>Primates</taxon>
        <taxon>Haplorrhini</taxon>
        <taxon>Catarrhini</taxon>
        <taxon>Hominidae</taxon>
        <taxon>Homo</taxon>
    </lineage>
</organism>
<comment type="function">
    <text evidence="2 9">Required for ribosome biogenesis and telomere maintenance. Part of the H/ACA small nucleolar ribonucleoprotein (H/ACA snoRNP) complex, which catalyzes pseudouridylation of rRNA (PubMed:32554502). This involves the isomerization of uridine such that the ribose is subsequently attached to C5, instead of the normal N1. Each rRNA can contain up to 100 pseudouridine ('psi') residues, which may serve to stabilize the conformation of rRNAs. May also be required for correct processing or intranuclear trafficking of TERC, the RNA component of the telomerase reverse transcriptase (TERT) holoenzyme.</text>
</comment>
<comment type="subunit">
    <text evidence="1 3 5 6 7">Part of the H/ACA small nucleolar ribonucleoprotein (H/ACA snoRNP) complex, which contains NHP2/NOLA2, GAR1/NOLA1, NOP10/NOLA3, and DKC1/NOLA4, which is presumed to be the catalytic subunit (PubMed:11074001). The complex contains a stable core formed by binding of one or two NOP10-DKC1 heterodimers to NHP2; GAR1 subsequently binds to this core via DKC1 (PubMed:11074001). The complex binds a box H/ACA small nucleolar RNA (snoRNA), which may target the specific site of modification within the RNA substrate (PubMed:16601202). During assembly, the complex contains NAF1 instead of GAR1/NOLA1 (PubMed:11074001, PubMed:16601202). The complex also interacts with TERC, which contains a 3'-terminal domain related to the box H/ACA snoRNAs (PubMed:11074001, PubMed:16601202). Specific interactions with snoRNAs or TERC are mediated by GAR1 and NHP2 (PubMed:11074001, PubMed:16601202). Associates with NOLC1/NOPP140 (PubMed:11074001, PubMed:16601202). H/ACA snoRNPs interact with the SMN complex, consisting of SMN1 or SMN2, GEMIN2/SIP1, DDX20/GEMIN3, and GEMIN4 (PubMed:11074001, PubMed:16601202). This is mediated by interaction between GAR1 and SMN1 or SMN2 (PubMed:11074001, PubMed:16601202). The SMN complex may be required for correct assembly of the H/ACA snoRNP complex (PubMed:11074001, PubMed:16601202). Component of the telomerase holoenzyme complex composed of one molecule of TERT, one molecule of WRAP53/TCAB1, two molecules of H/ACA ribonucleoprotein complex subunits DKC1, NOP10, NHP2 and GAR1, and a telomerase RNA template component (TERC) (PubMed:19179534, PubMed:20351177, PubMed:29695869). The telomerase holoenzyme complex is associated with TEP1, SMG6/EST1A and POT1 (PubMed:19179534).</text>
</comment>
<comment type="interaction">
    <interactant intactId="EBI-1642169">
        <id>Q9NPE3</id>
    </interactant>
    <interactant intactId="EBI-12011224">
        <id>Q9NPB3</id>
        <label>CABP2</label>
    </interactant>
    <organismsDiffer>false</organismsDiffer>
    <experiments>3</experiments>
</comment>
<comment type="interaction">
    <interactant intactId="EBI-1642169">
        <id>Q9NPE3</id>
    </interactant>
    <interactant intactId="EBI-16439278">
        <id>Q6FHY5</id>
        <label>MEOX2</label>
    </interactant>
    <organismsDiffer>false</organismsDiffer>
    <experiments>3</experiments>
</comment>
<comment type="interaction">
    <interactant intactId="EBI-1642169">
        <id>Q9NPE3</id>
    </interactant>
    <interactant intactId="EBI-1050064">
        <id>Q9NX24</id>
        <label>NHP2</label>
    </interactant>
    <organismsDiffer>false</organismsDiffer>
    <experiments>12</experiments>
</comment>
<comment type="subcellular location">
    <subcellularLocation>
        <location evidence="1">Nucleus</location>
        <location evidence="1">Nucleolus</location>
    </subcellularLocation>
    <subcellularLocation>
        <location evidence="1">Nucleus</location>
        <location evidence="1">Cajal body</location>
    </subcellularLocation>
    <text>Also localized to Cajal bodies (coiled bodies).</text>
</comment>
<comment type="disease" evidence="4">
    <disease id="DI-00408">
        <name>Dyskeratosis congenita, autosomal recessive, 1</name>
        <acronym>DKCB1</acronym>
        <description>A rare multisystem disorder caused by defective telomere maintenance. It is characterized by progressive bone marrow failure, and the clinical triad of reticulated skin hyperpigmentation, nail dystrophy, and mucosal leukoplakia. Common but variable features include premature graying, aplastic anemia, low platelets, osteoporosis, pulmonary fibrosis, and liver fibrosis among others. Early mortality is often associated with bone marrow failure, infections, fatal pulmonary complications, or malignancy.</description>
        <dbReference type="MIM" id="224230"/>
    </disease>
    <text>The disease is caused by variants affecting the gene represented in this entry.</text>
</comment>
<comment type="disease" evidence="9">
    <disease id="DI-06696">
        <name>Cataracts, hearing impairment, nephrotic syndrome, and enterocolitis 2</name>
        <acronym>CHINE2</acronym>
        <description>An autosomal recessive disorder characterized by infantile onset of steroid-resistant nephrotic syndrome, cataracts, sensorineural deafness, and enterocolitis. It results in death in early childhood.</description>
        <dbReference type="MIM" id="620425"/>
    </disease>
    <text>The disease may be caused by variants affecting the gene represented in this entry.</text>
</comment>
<comment type="disease" evidence="8">
    <disease id="DI-06698">
        <name>Pulmonary fibrosis, and/or bone marrow failure syndrome, telomere-related, 9</name>
        <acronym>PFBMFT9</acronym>
        <description>An autosomal dominant disease associated with shortened telomeres. Pulmonary fibrosis is the most common manifestation. Other features include aplastic anemia due to bone marrow failure, hepatic fibrosis, and increased cancer risk. Phenotype, age at onset, and severity are determined by telomere length. PFBMFT9 is characterized by the development of pulmonary fibrosis or hematologic abnormalities in adulthood. Liver disease may also be present. There is incomplete penetrance and evidence of genetic anticipation.</description>
        <dbReference type="MIM" id="620400"/>
    </disease>
    <text>The disease may be caused by variants affecting the gene represented in this entry.</text>
</comment>
<comment type="similarity">
    <text evidence="10">Belongs to the NOP10 family.</text>
</comment>
<evidence type="ECO:0000269" key="1">
    <source>
    </source>
</evidence>
<evidence type="ECO:0000269" key="2">
    <source>
    </source>
</evidence>
<evidence type="ECO:0000269" key="3">
    <source>
    </source>
</evidence>
<evidence type="ECO:0000269" key="4">
    <source>
    </source>
</evidence>
<evidence type="ECO:0000269" key="5">
    <source>
    </source>
</evidence>
<evidence type="ECO:0000269" key="6">
    <source>
    </source>
</evidence>
<evidence type="ECO:0000269" key="7">
    <source>
    </source>
</evidence>
<evidence type="ECO:0000269" key="8">
    <source>
    </source>
</evidence>
<evidence type="ECO:0000269" key="9">
    <source>
    </source>
</evidence>
<evidence type="ECO:0000305" key="10"/>
<evidence type="ECO:0007829" key="11">
    <source>
        <dbReference type="PDB" id="7BGB"/>
    </source>
</evidence>
<evidence type="ECO:0007829" key="12">
    <source>
        <dbReference type="PDB" id="7TRC"/>
    </source>
</evidence>
<dbReference type="EMBL" id="AB043103">
    <property type="protein sequence ID" value="BAA96107.1"/>
    <property type="molecule type" value="Genomic_DNA"/>
</dbReference>
<dbReference type="EMBL" id="AB043104">
    <property type="protein sequence ID" value="BAA96133.1"/>
    <property type="molecule type" value="mRNA"/>
</dbReference>
<dbReference type="EMBL" id="BC008886">
    <property type="protein sequence ID" value="AAH08886.1"/>
    <property type="molecule type" value="mRNA"/>
</dbReference>
<dbReference type="EMBL" id="BC063023">
    <property type="protein sequence ID" value="AAH63023.1"/>
    <property type="molecule type" value="mRNA"/>
</dbReference>
<dbReference type="CCDS" id="CCDS10037.1"/>
<dbReference type="RefSeq" id="NP_061118.1">
    <property type="nucleotide sequence ID" value="NM_018648.4"/>
</dbReference>
<dbReference type="PDB" id="7BGB">
    <property type="method" value="EM"/>
    <property type="resolution" value="3.39 A"/>
    <property type="chains" value="F/J=1-64"/>
</dbReference>
<dbReference type="PDB" id="7TRC">
    <property type="method" value="EM"/>
    <property type="resolution" value="3.30 A"/>
    <property type="chains" value="F/J=1-64"/>
</dbReference>
<dbReference type="PDB" id="7V9A">
    <property type="method" value="EM"/>
    <property type="resolution" value="3.94 A"/>
    <property type="chains" value="F/J=1-64"/>
</dbReference>
<dbReference type="PDB" id="8OUE">
    <property type="method" value="EM"/>
    <property type="resolution" value="2.70 A"/>
    <property type="chains" value="F/J=1-64"/>
</dbReference>
<dbReference type="PDB" id="8OUF">
    <property type="method" value="EM"/>
    <property type="resolution" value="3.10 A"/>
    <property type="chains" value="F/J=1-64"/>
</dbReference>
<dbReference type="PDBsum" id="7BGB"/>
<dbReference type="PDBsum" id="7TRC"/>
<dbReference type="PDBsum" id="7V9A"/>
<dbReference type="PDBsum" id="8OUE"/>
<dbReference type="PDBsum" id="8OUF"/>
<dbReference type="EMDB" id="EMD-12177"/>
<dbReference type="EMDB" id="EMD-17190"/>
<dbReference type="EMDB" id="EMD-17191"/>
<dbReference type="EMDB" id="EMD-26085"/>
<dbReference type="EMDB" id="EMD-31813"/>
<dbReference type="EMDB" id="EMD-31814"/>
<dbReference type="SMR" id="Q9NPE3"/>
<dbReference type="BioGRID" id="120685">
    <property type="interactions" value="105"/>
</dbReference>
<dbReference type="ComplexPortal" id="CPX-265">
    <property type="entry name" value="Telomerase holoenzyme complex"/>
</dbReference>
<dbReference type="CORUM" id="Q9NPE3"/>
<dbReference type="DIP" id="DIP-40092N"/>
<dbReference type="FunCoup" id="Q9NPE3">
    <property type="interactions" value="1740"/>
</dbReference>
<dbReference type="IntAct" id="Q9NPE3">
    <property type="interactions" value="63"/>
</dbReference>
<dbReference type="MINT" id="Q9NPE3"/>
<dbReference type="STRING" id="9606.ENSP00000332198"/>
<dbReference type="GlyGen" id="Q9NPE3">
    <property type="glycosylation" value="1 site, 1 O-linked glycan (1 site)"/>
</dbReference>
<dbReference type="iPTMnet" id="Q9NPE3"/>
<dbReference type="MetOSite" id="Q9NPE3"/>
<dbReference type="PhosphoSitePlus" id="Q9NPE3"/>
<dbReference type="BioMuta" id="NOP10"/>
<dbReference type="DMDM" id="54036209"/>
<dbReference type="jPOST" id="Q9NPE3"/>
<dbReference type="MassIVE" id="Q9NPE3"/>
<dbReference type="PaxDb" id="9606-ENSP00000332198"/>
<dbReference type="PeptideAtlas" id="Q9NPE3"/>
<dbReference type="ProteomicsDB" id="81979"/>
<dbReference type="Pumba" id="Q9NPE3"/>
<dbReference type="TopDownProteomics" id="Q9NPE3"/>
<dbReference type="Antibodypedia" id="41964">
    <property type="antibodies" value="60 antibodies from 17 providers"/>
</dbReference>
<dbReference type="DNASU" id="55505"/>
<dbReference type="Ensembl" id="ENST00000328848.6">
    <property type="protein sequence ID" value="ENSP00000332198.5"/>
    <property type="gene ID" value="ENSG00000182117.7"/>
</dbReference>
<dbReference type="Ensembl" id="ENST00000709520.1">
    <property type="protein sequence ID" value="ENSP00000517739.1"/>
    <property type="gene ID" value="ENSG00000291996.1"/>
</dbReference>
<dbReference type="GeneID" id="55505"/>
<dbReference type="KEGG" id="hsa:55505"/>
<dbReference type="MANE-Select" id="ENST00000328848.6">
    <property type="protein sequence ID" value="ENSP00000332198.5"/>
    <property type="RefSeq nucleotide sequence ID" value="NM_018648.4"/>
    <property type="RefSeq protein sequence ID" value="NP_061118.1"/>
</dbReference>
<dbReference type="UCSC" id="uc001zie.2">
    <property type="organism name" value="human"/>
</dbReference>
<dbReference type="AGR" id="HGNC:14378"/>
<dbReference type="CTD" id="55505"/>
<dbReference type="DisGeNET" id="55505"/>
<dbReference type="GeneCards" id="NOP10"/>
<dbReference type="GeneReviews" id="NOP10"/>
<dbReference type="HGNC" id="HGNC:14378">
    <property type="gene designation" value="NOP10"/>
</dbReference>
<dbReference type="HPA" id="ENSG00000182117">
    <property type="expression patterns" value="Low tissue specificity"/>
</dbReference>
<dbReference type="MalaCards" id="NOP10"/>
<dbReference type="MIM" id="224230">
    <property type="type" value="phenotype"/>
</dbReference>
<dbReference type="MIM" id="606471">
    <property type="type" value="gene"/>
</dbReference>
<dbReference type="MIM" id="620400">
    <property type="type" value="phenotype"/>
</dbReference>
<dbReference type="MIM" id="620425">
    <property type="type" value="phenotype"/>
</dbReference>
<dbReference type="neXtProt" id="NX_Q9NPE3"/>
<dbReference type="OpenTargets" id="ENSG00000182117"/>
<dbReference type="Orphanet" id="1775">
    <property type="disease" value="Dyskeratosis congenita"/>
</dbReference>
<dbReference type="PharmGKB" id="PA164723973"/>
<dbReference type="VEuPathDB" id="HostDB:ENSG00000182117"/>
<dbReference type="eggNOG" id="KOG3503">
    <property type="taxonomic scope" value="Eukaryota"/>
</dbReference>
<dbReference type="GeneTree" id="ENSGT00390000012563"/>
<dbReference type="HOGENOM" id="CLU_184680_1_0_1"/>
<dbReference type="InParanoid" id="Q9NPE3"/>
<dbReference type="OMA" id="HRIIIKK"/>
<dbReference type="OrthoDB" id="13807at2759"/>
<dbReference type="PAN-GO" id="Q9NPE3">
    <property type="GO annotations" value="6 GO annotations based on evolutionary models"/>
</dbReference>
<dbReference type="PhylomeDB" id="Q9NPE3"/>
<dbReference type="TreeFam" id="TF300211"/>
<dbReference type="PathwayCommons" id="Q9NPE3"/>
<dbReference type="Reactome" id="R-HSA-171319">
    <property type="pathway name" value="Telomere Extension By Telomerase"/>
</dbReference>
<dbReference type="Reactome" id="R-HSA-6790901">
    <property type="pathway name" value="rRNA modification in the nucleus and cytosol"/>
</dbReference>
<dbReference type="SignaLink" id="Q9NPE3"/>
<dbReference type="SIGNOR" id="Q9NPE3"/>
<dbReference type="BioGRID-ORCS" id="55505">
    <property type="hits" value="693 hits in 1164 CRISPR screens"/>
</dbReference>
<dbReference type="CD-CODE" id="6F24707C">
    <property type="entry name" value="Cajal body"/>
</dbReference>
<dbReference type="CD-CODE" id="91857CE7">
    <property type="entry name" value="Nucleolus"/>
</dbReference>
<dbReference type="ChiTaRS" id="NOP10">
    <property type="organism name" value="human"/>
</dbReference>
<dbReference type="GenomeRNAi" id="55505"/>
<dbReference type="Pharos" id="Q9NPE3">
    <property type="development level" value="Tbio"/>
</dbReference>
<dbReference type="PRO" id="PR:Q9NPE3"/>
<dbReference type="Proteomes" id="UP000005640">
    <property type="component" value="Chromosome 15"/>
</dbReference>
<dbReference type="RNAct" id="Q9NPE3">
    <property type="molecule type" value="protein"/>
</dbReference>
<dbReference type="Bgee" id="ENSG00000182117">
    <property type="expression patterns" value="Expressed in monocyte and 205 other cell types or tissues"/>
</dbReference>
<dbReference type="ExpressionAtlas" id="Q9NPE3">
    <property type="expression patterns" value="baseline and differential"/>
</dbReference>
<dbReference type="GO" id="GO:0072589">
    <property type="term" value="C:box H/ACA scaRNP complex"/>
    <property type="evidence" value="ECO:0000304"/>
    <property type="project" value="BHF-UCL"/>
</dbReference>
<dbReference type="GO" id="GO:0031429">
    <property type="term" value="C:box H/ACA snoRNP complex"/>
    <property type="evidence" value="ECO:0000314"/>
    <property type="project" value="BHF-UCL"/>
</dbReference>
<dbReference type="GO" id="GO:0090661">
    <property type="term" value="C:box H/ACA telomerase RNP complex"/>
    <property type="evidence" value="ECO:0000314"/>
    <property type="project" value="BHF-UCL"/>
</dbReference>
<dbReference type="GO" id="GO:0016604">
    <property type="term" value="C:nuclear body"/>
    <property type="evidence" value="ECO:0000314"/>
    <property type="project" value="HPA"/>
</dbReference>
<dbReference type="GO" id="GO:0005654">
    <property type="term" value="C:nucleoplasm"/>
    <property type="evidence" value="ECO:0000304"/>
    <property type="project" value="Reactome"/>
</dbReference>
<dbReference type="GO" id="GO:0005732">
    <property type="term" value="C:sno(s)RNA-containing ribonucleoprotein complex"/>
    <property type="evidence" value="ECO:0000304"/>
    <property type="project" value="UniProtKB"/>
</dbReference>
<dbReference type="GO" id="GO:0005697">
    <property type="term" value="C:telomerase holoenzyme complex"/>
    <property type="evidence" value="ECO:0000314"/>
    <property type="project" value="UniProtKB"/>
</dbReference>
<dbReference type="GO" id="GO:0034513">
    <property type="term" value="F:box H/ACA snoRNA binding"/>
    <property type="evidence" value="ECO:0000353"/>
    <property type="project" value="BHF-UCL"/>
</dbReference>
<dbReference type="GO" id="GO:0003723">
    <property type="term" value="F:RNA binding"/>
    <property type="evidence" value="ECO:0000353"/>
    <property type="project" value="BHF-UCL"/>
</dbReference>
<dbReference type="GO" id="GO:0070034">
    <property type="term" value="F:telomerase RNA binding"/>
    <property type="evidence" value="ECO:0000353"/>
    <property type="project" value="BHF-UCL"/>
</dbReference>
<dbReference type="GO" id="GO:0001522">
    <property type="term" value="P:pseudouridine synthesis"/>
    <property type="evidence" value="ECO:0000303"/>
    <property type="project" value="UniProtKB"/>
</dbReference>
<dbReference type="GO" id="GO:0031118">
    <property type="term" value="P:rRNA pseudouridine synthesis"/>
    <property type="evidence" value="ECO:0000318"/>
    <property type="project" value="GO_Central"/>
</dbReference>
<dbReference type="GO" id="GO:0031120">
    <property type="term" value="P:snRNA pseudouridine synthesis"/>
    <property type="evidence" value="ECO:0000318"/>
    <property type="project" value="GO_Central"/>
</dbReference>
<dbReference type="GO" id="GO:0090671">
    <property type="term" value="P:telomerase RNA localization to Cajal body"/>
    <property type="evidence" value="ECO:0007001"/>
    <property type="project" value="BHF-UCL"/>
</dbReference>
<dbReference type="GO" id="GO:0007004">
    <property type="term" value="P:telomere maintenance via telomerase"/>
    <property type="evidence" value="ECO:0000314"/>
    <property type="project" value="UniProtKB"/>
</dbReference>
<dbReference type="FunFam" id="2.20.28.40:FF:000002">
    <property type="entry name" value="H/ACA ribonucleoprotein complex subunit 3"/>
    <property type="match status" value="1"/>
</dbReference>
<dbReference type="Gene3D" id="2.20.28.40">
    <property type="entry name" value="H/ACA ribonucleoprotein complex, subunit Nop10"/>
    <property type="match status" value="1"/>
</dbReference>
<dbReference type="InterPro" id="IPR007264">
    <property type="entry name" value="H/ACA_rnp_Nop10"/>
</dbReference>
<dbReference type="InterPro" id="IPR036756">
    <property type="entry name" value="H/ACA_rnp_Nop10_sf"/>
</dbReference>
<dbReference type="PANTHER" id="PTHR13305:SF0">
    <property type="entry name" value="H_ACA RIBONUCLEOPROTEIN COMPLEX SUBUNIT 3"/>
    <property type="match status" value="1"/>
</dbReference>
<dbReference type="PANTHER" id="PTHR13305">
    <property type="entry name" value="RIBOSOME BIOGENESIS PROTEIN NOP10"/>
    <property type="match status" value="1"/>
</dbReference>
<dbReference type="Pfam" id="PF04135">
    <property type="entry name" value="Nop10p"/>
    <property type="match status" value="1"/>
</dbReference>
<dbReference type="SUPFAM" id="SSF144210">
    <property type="entry name" value="Nop10-like SnoRNP"/>
    <property type="match status" value="1"/>
</dbReference>
<accession>Q9NPE3</accession>
<feature type="chain" id="PRO_0000149001" description="H/ACA ribonucleoprotein complex subunit 3">
    <location>
        <begin position="1"/>
        <end position="64"/>
    </location>
</feature>
<feature type="sequence variant" id="VAR_088624" description="In PFBMFT9; uncertain significance." evidence="8">
    <original>Y</original>
    <variation>C</variation>
    <location>
        <position position="6"/>
    </location>
</feature>
<feature type="sequence variant" id="VAR_088625" description="In CHINE2; likely pathogenic; decreased rRNA pseudouridine synthesis in peripheral blood cells from a homozygous patient; reduced protein abundance in homozygous patient cells; no effect on interaction with DKC1." evidence="9">
    <original>T</original>
    <variation>M</variation>
    <location>
        <position position="16"/>
    </location>
</feature>
<feature type="sequence variant" id="VAR_043725" description="In DKCB1; dbSNP:rs121908092." evidence="4">
    <original>R</original>
    <variation>W</variation>
    <location>
        <position position="34"/>
    </location>
</feature>
<feature type="strand" evidence="12">
    <location>
        <begin position="4"/>
        <end position="7"/>
    </location>
</feature>
<feature type="strand" evidence="12">
    <location>
        <begin position="9"/>
        <end position="20"/>
    </location>
</feature>
<feature type="strand" evidence="11">
    <location>
        <begin position="22"/>
        <end position="24"/>
    </location>
</feature>
<feature type="strand" evidence="12">
    <location>
        <begin position="28"/>
        <end position="31"/>
    </location>
</feature>
<feature type="helix" evidence="12">
    <location>
        <begin position="42"/>
        <end position="51"/>
    </location>
</feature>
<feature type="helix" evidence="12">
    <location>
        <begin position="56"/>
        <end position="58"/>
    </location>
</feature>
<sequence length="64" mass="7706">MFLQYYLNEQGDRVYTLKKFDPMGQQTCSAHPARFSPDDKYSRHRITIKKRFKVLMTQQPRPVL</sequence>
<reference key="1">
    <citation type="submission" date="2000-05" db="EMBL/GenBank/DDBJ databases">
        <authorList>
            <person name="Toji S."/>
            <person name="Yano M."/>
            <person name="Tamai K."/>
        </authorList>
    </citation>
    <scope>NUCLEOTIDE SEQUENCE [GENOMIC DNA / MRNA]</scope>
</reference>
<reference key="2">
    <citation type="journal article" date="2004" name="Genome Res.">
        <title>The status, quality, and expansion of the NIH full-length cDNA project: the Mammalian Gene Collection (MGC).</title>
        <authorList>
            <consortium name="The MGC Project Team"/>
        </authorList>
    </citation>
    <scope>NUCLEOTIDE SEQUENCE [LARGE SCALE MRNA]</scope>
    <source>
        <tissue>B-cell</tissue>
        <tissue>Pancreas</tissue>
    </source>
</reference>
<reference key="3">
    <citation type="journal article" date="2000" name="Mol. Cell. Biol.">
        <title>Human H/ACA small nucleolar RNPs and telomerase share evolutionarily conserved proteins NHP2 and NOP10.</title>
        <authorList>
            <person name="Pogacic V."/>
            <person name="Dragon F."/>
            <person name="Filipowicz W."/>
        </authorList>
    </citation>
    <scope>SUBCELLULAR LOCATION</scope>
    <scope>INTERACTION WITH GAR1; NHP2 AND DCK1</scope>
</reference>
<reference key="4">
    <citation type="journal article" date="2004" name="EMBO J.">
        <title>Architecture and assembly of mammalian H/ACA small nucleolar and telomerase ribonucleoproteins.</title>
        <authorList>
            <person name="Wang C."/>
            <person name="Meier U.T."/>
        </authorList>
    </citation>
    <scope>FUNCTION</scope>
    <scope>CHARACTERIZATION OF THE H/ACA SNORNP COMPLEX</scope>
</reference>
<reference key="5">
    <citation type="journal article" date="2006" name="RNA">
        <title>hNaf1 is required for accumulation of human box H/ACA snoRNPs, scaRNPs, and telomerase.</title>
        <authorList>
            <person name="Hoareau-Aveilla C."/>
            <person name="Bonoli M."/>
            <person name="Caizergues-Ferrer M."/>
            <person name="Henry Y."/>
        </authorList>
    </citation>
    <scope>INTERACTION WITH NAF1</scope>
</reference>
<reference key="6">
    <citation type="journal article" date="2009" name="Science">
        <title>A human telomerase holoenzyme protein required for Cajal body localization and telomere synthesis.</title>
        <authorList>
            <person name="Venteicher A.S."/>
            <person name="Abreu E.B."/>
            <person name="Meng Z."/>
            <person name="McCann K.E."/>
            <person name="Terns R.M."/>
            <person name="Veenstra T.D."/>
            <person name="Terns M.P."/>
            <person name="Artandi S.E."/>
        </authorList>
    </citation>
    <scope>IDENTIFICATION IN THE TELOMERASE HOLOENZYME COMPLEX</scope>
</reference>
<reference key="7">
    <citation type="journal article" date="2010" name="Mol. Cell. Biol.">
        <title>Specificity and stoichiometry of subunit interactions in the human telomerase holoenzyme assembled in vivo.</title>
        <authorList>
            <person name="Egan E.D."/>
            <person name="Collins K."/>
        </authorList>
    </citation>
    <scope>IDENTIFICATION IN THE TELOMERASE HOLOENZYME COMPLEX</scope>
</reference>
<reference key="8">
    <citation type="journal article" date="2011" name="BMC Syst. Biol.">
        <title>Initial characterization of the human central proteome.</title>
        <authorList>
            <person name="Burkard T.R."/>
            <person name="Planyavsky M."/>
            <person name="Kaupe I."/>
            <person name="Breitwieser F.P."/>
            <person name="Buerckstuemmer T."/>
            <person name="Bennett K.L."/>
            <person name="Superti-Furga G."/>
            <person name="Colinge J."/>
        </authorList>
    </citation>
    <scope>IDENTIFICATION BY MASS SPECTROMETRY [LARGE SCALE ANALYSIS]</scope>
</reference>
<reference key="9">
    <citation type="journal article" date="2012" name="Proc. Natl. Acad. Sci. U.S.A.">
        <title>N-terminal acetylome analyses and functional insights of the N-terminal acetyltransferase NatB.</title>
        <authorList>
            <person name="Van Damme P."/>
            <person name="Lasa M."/>
            <person name="Polevoda B."/>
            <person name="Gazquez C."/>
            <person name="Elosegui-Artola A."/>
            <person name="Kim D.S."/>
            <person name="De Juan-Pardo E."/>
            <person name="Demeyer K."/>
            <person name="Hole K."/>
            <person name="Larrea E."/>
            <person name="Timmerman E."/>
            <person name="Prieto J."/>
            <person name="Arnesen T."/>
            <person name="Sherman F."/>
            <person name="Gevaert K."/>
            <person name="Aldabe R."/>
        </authorList>
    </citation>
    <scope>IDENTIFICATION BY MASS SPECTROMETRY [LARGE SCALE ANALYSIS]</scope>
</reference>
<reference key="10">
    <citation type="journal article" date="2018" name="Nature">
        <title>Cryo-EM structure of substrate-bound human telomerase holoenzyme.</title>
        <authorList>
            <person name="Nguyen T.H.D."/>
            <person name="Tam J."/>
            <person name="Wu R.A."/>
            <person name="Greber B.J."/>
            <person name="Toso D."/>
            <person name="Nogales E."/>
            <person name="Collins K."/>
        </authorList>
    </citation>
    <scope>STRUCTURE BY ELECTRON MICROSCOPY (7.7 ANGSTROMS) OF THE TELOMERASE HOLOENZYME COMPLEX</scope>
</reference>
<reference key="11">
    <citation type="journal article" date="2007" name="Hum. Mol. Genet.">
        <title>Genetic heterogeneity in autosomal recessive dyskeratosis congenita with one subtype due to mutations in the telomerase-associated protein NOP10.</title>
        <authorList>
            <person name="Walne A.J."/>
            <person name="Vulliamy T."/>
            <person name="Marrone A."/>
            <person name="Beswick R."/>
            <person name="Kirwan M."/>
            <person name="Masunari Y."/>
            <person name="Al-Qurashi F.-H."/>
            <person name="Aljurf M."/>
            <person name="Dokal I."/>
        </authorList>
    </citation>
    <scope>VARIANT DKCB1 TRP-34</scope>
</reference>
<reference key="12">
    <citation type="journal article" date="2020" name="Eur. Respir. J.">
        <title>First heterozygous NOP10 mutation in familial pulmonary fibrosis.</title>
        <authorList>
            <person name="Kannengiesser C."/>
            <person name="Manali E.D."/>
            <person name="Revy P."/>
            <person name="Callebaut I."/>
            <person name="Ba I."/>
            <person name="Borgel A."/>
            <person name="Oudin C."/>
            <person name="Haritou A."/>
            <person name="Kolilekas L."/>
            <person name="Malagari K."/>
            <person name="Borie R."/>
            <person name="Lainey E."/>
            <person name="Boileau C."/>
            <person name="Crestani B."/>
            <person name="Papiris S.A."/>
        </authorList>
    </citation>
    <scope>VARIANT PFBMFT9 CYS-6</scope>
    <scope>INVOLVEMENT IN PFBMFT9</scope>
</reference>
<reference key="13">
    <citation type="journal article" date="2020" name="Proc. Natl. Acad. Sci. U.S.A.">
        <title>Pseudouridylation defect due to DKC1 and NOP10 mutations causes nephrotic syndrome with cataracts, hearing impairment, and enterocolitis.</title>
        <authorList>
            <person name="Balogh E."/>
            <person name="Chandler J.C."/>
            <person name="Varga M."/>
            <person name="Tahoun M."/>
            <person name="Menyhard D.K."/>
            <person name="Schay G."/>
            <person name="Goncalves T."/>
            <person name="Hamar R."/>
            <person name="Legradi R."/>
            <person name="Szekeres A."/>
            <person name="Gribouval O."/>
            <person name="Kleta R."/>
            <person name="Stanescu H."/>
            <person name="Bockenhauer D."/>
            <person name="Kerti A."/>
            <person name="Williams H."/>
            <person name="Kinsler V."/>
            <person name="Di W.L."/>
            <person name="Curtis D."/>
            <person name="Kolatsi-Joannou M."/>
            <person name="Hammid H."/>
            <person name="Szocs A."/>
            <person name="Perczel K."/>
            <person name="Maka E."/>
            <person name="Toldi G."/>
            <person name="Sava F."/>
            <person name="Arrondel C."/>
            <person name="Kardos M."/>
            <person name="Fintha A."/>
            <person name="Hossain A."/>
            <person name="D'Arco F."/>
            <person name="Kaliakatsos M."/>
            <person name="Koeglmeier J."/>
            <person name="Mifsud W."/>
            <person name="Moosajee M."/>
            <person name="Faro A."/>
            <person name="Javorszky E."/>
            <person name="Rudas G."/>
            <person name="Saied M.H."/>
            <person name="Marzouk S."/>
            <person name="Kelen K."/>
            <person name="Goetze J."/>
            <person name="Reusz G."/>
            <person name="Tulassay T."/>
            <person name="Dragon F."/>
            <person name="Mollet G."/>
            <person name="Motameny S."/>
            <person name="Thiele H."/>
            <person name="Dorval G."/>
            <person name="Nuernberg P."/>
            <person name="Perczel A."/>
            <person name="Szabo A.J."/>
            <person name="Long D.A."/>
            <person name="Tomita K."/>
            <person name="Antignac C."/>
            <person name="Waters A.M."/>
            <person name="Tory K."/>
        </authorList>
    </citation>
    <scope>VARIANT CHINE2 MET-16</scope>
    <scope>INVOLVEMENT IN CHINE2</scope>
    <scope>CHARACTERIZATION OF VARIANT CHINE2 MET-16</scope>
    <scope>FUNCTION</scope>
</reference>
<name>NOP10_HUMAN</name>
<keyword id="KW-0002">3D-structure</keyword>
<keyword id="KW-0898">Cataract</keyword>
<keyword id="KW-0209">Deafness</keyword>
<keyword id="KW-0225">Disease variant</keyword>
<keyword id="KW-1011">Dyskeratosis congenita</keyword>
<keyword id="KW-0539">Nucleus</keyword>
<keyword id="KW-1267">Proteomics identification</keyword>
<keyword id="KW-1185">Reference proteome</keyword>
<keyword id="KW-0687">Ribonucleoprotein</keyword>
<keyword id="KW-0690">Ribosome biogenesis</keyword>
<keyword id="KW-0698">rRNA processing</keyword>
<protein>
    <recommendedName>
        <fullName>H/ACA ribonucleoprotein complex subunit 3</fullName>
    </recommendedName>
    <alternativeName>
        <fullName>Nucleolar protein 10</fullName>
    </alternativeName>
    <alternativeName>
        <fullName>Nucleolar protein family A member 3</fullName>
    </alternativeName>
    <alternativeName>
        <fullName>snoRNP protein NOP10</fullName>
    </alternativeName>
</protein>
<proteinExistence type="evidence at protein level"/>
<gene>
    <name type="primary">NOP10</name>
    <name type="synonym">NOLA3</name>
</gene>